<feature type="initiator methionine" description="Removed" evidence="2">
    <location>
        <position position="1"/>
    </location>
</feature>
<feature type="chain" id="PRO_0000085779" description="Cyclin-dependent kinase 4">
    <location>
        <begin position="2"/>
        <end position="303"/>
    </location>
</feature>
<feature type="domain" description="Protein kinase" evidence="4">
    <location>
        <begin position="6"/>
        <end position="295"/>
    </location>
</feature>
<feature type="region of interest" description="Required for binding D-type cyclins" evidence="1">
    <location>
        <begin position="50"/>
        <end position="56"/>
    </location>
</feature>
<feature type="active site" description="Proton acceptor" evidence="4 5">
    <location>
        <position position="140"/>
    </location>
</feature>
<feature type="binding site" evidence="4">
    <location>
        <begin position="12"/>
        <end position="20"/>
    </location>
    <ligand>
        <name>ATP</name>
        <dbReference type="ChEBI" id="CHEBI:30616"/>
    </ligand>
</feature>
<feature type="binding site" evidence="4">
    <location>
        <position position="35"/>
    </location>
    <ligand>
        <name>ATP</name>
        <dbReference type="ChEBI" id="CHEBI:30616"/>
    </ligand>
</feature>
<feature type="modified residue" description="N-acetylalanine" evidence="2">
    <location>
        <position position="2"/>
    </location>
</feature>
<feature type="modified residue" description="Phosphothreonine; by CAK" evidence="10">
    <location>
        <position position="172"/>
    </location>
</feature>
<feature type="modified residue" description="Phosphoserine" evidence="3">
    <location>
        <position position="300"/>
    </location>
</feature>
<dbReference type="EC" id="2.7.11.22"/>
<dbReference type="EMBL" id="L01640">
    <property type="protein sequence ID" value="AAA37646.1"/>
    <property type="molecule type" value="mRNA"/>
</dbReference>
<dbReference type="EMBL" id="BC046336">
    <property type="protein sequence ID" value="AAH46336.1"/>
    <property type="molecule type" value="mRNA"/>
</dbReference>
<dbReference type="EMBL" id="BC052694">
    <property type="protein sequence ID" value="AAH52694.1"/>
    <property type="molecule type" value="mRNA"/>
</dbReference>
<dbReference type="EMBL" id="X57238">
    <property type="protein sequence ID" value="CAA40514.1"/>
    <property type="molecule type" value="mRNA"/>
</dbReference>
<dbReference type="EMBL" id="X65069">
    <property type="protein sequence ID" value="CAA46202.1"/>
    <property type="molecule type" value="mRNA"/>
</dbReference>
<dbReference type="CCDS" id="CCDS24226.1"/>
<dbReference type="PIR" id="A44293">
    <property type="entry name" value="A44293"/>
</dbReference>
<dbReference type="RefSeq" id="NP_034000.1">
    <property type="nucleotide sequence ID" value="NM_009870.4"/>
</dbReference>
<dbReference type="SMR" id="P30285"/>
<dbReference type="BioGRID" id="198645">
    <property type="interactions" value="27"/>
</dbReference>
<dbReference type="ComplexPortal" id="CPX-2073">
    <property type="entry name" value="Cyclin D1-CDK4 complex"/>
</dbReference>
<dbReference type="ComplexPortal" id="CPX-2074">
    <property type="entry name" value="Cyclin D2-CDK4 complex"/>
</dbReference>
<dbReference type="ComplexPortal" id="CPX-2077">
    <property type="entry name" value="Cyclin D3-CDK4 complex"/>
</dbReference>
<dbReference type="CORUM" id="P30285"/>
<dbReference type="DIP" id="DIP-194N"/>
<dbReference type="FunCoup" id="P30285">
    <property type="interactions" value="1647"/>
</dbReference>
<dbReference type="IntAct" id="P30285">
    <property type="interactions" value="17"/>
</dbReference>
<dbReference type="MINT" id="P30285"/>
<dbReference type="STRING" id="10090.ENSMUSP00000006911"/>
<dbReference type="BindingDB" id="P30285"/>
<dbReference type="ChEMBL" id="CHEMBL2134"/>
<dbReference type="GlyGen" id="P30285">
    <property type="glycosylation" value="2 sites, 1 O-linked glycan (1 site)"/>
</dbReference>
<dbReference type="iPTMnet" id="P30285"/>
<dbReference type="PhosphoSitePlus" id="P30285"/>
<dbReference type="SwissPalm" id="P30285"/>
<dbReference type="jPOST" id="P30285"/>
<dbReference type="PaxDb" id="10090-ENSMUSP00000006911"/>
<dbReference type="PeptideAtlas" id="P30285"/>
<dbReference type="ProteomicsDB" id="281143"/>
<dbReference type="Pumba" id="P30285"/>
<dbReference type="Antibodypedia" id="4190">
    <property type="antibodies" value="1174 antibodies from 48 providers"/>
</dbReference>
<dbReference type="DNASU" id="12567"/>
<dbReference type="Ensembl" id="ENSMUST00000006911.12">
    <property type="protein sequence ID" value="ENSMUSP00000006911.6"/>
    <property type="gene ID" value="ENSMUSG00000006728.13"/>
</dbReference>
<dbReference type="GeneID" id="12567"/>
<dbReference type="KEGG" id="mmu:12567"/>
<dbReference type="UCSC" id="uc007hhv.2">
    <property type="organism name" value="mouse"/>
</dbReference>
<dbReference type="AGR" id="MGI:88357"/>
<dbReference type="CTD" id="1019"/>
<dbReference type="MGI" id="MGI:88357">
    <property type="gene designation" value="Cdk4"/>
</dbReference>
<dbReference type="VEuPathDB" id="HostDB:ENSMUSG00000006728"/>
<dbReference type="eggNOG" id="KOG0594">
    <property type="taxonomic scope" value="Eukaryota"/>
</dbReference>
<dbReference type="GeneTree" id="ENSGT00940000154770"/>
<dbReference type="InParanoid" id="P30285"/>
<dbReference type="OMA" id="KNFPPLM"/>
<dbReference type="OrthoDB" id="1732493at2759"/>
<dbReference type="PhylomeDB" id="P30285"/>
<dbReference type="TreeFam" id="TF101022"/>
<dbReference type="BRENDA" id="2.7.11.22">
    <property type="organism ID" value="3474"/>
</dbReference>
<dbReference type="Reactome" id="R-MMU-187577">
    <property type="pathway name" value="SCF(Skp2)-mediated degradation of p27/p21"/>
</dbReference>
<dbReference type="Reactome" id="R-MMU-2559580">
    <property type="pathway name" value="Oxidative Stress Induced Senescence"/>
</dbReference>
<dbReference type="Reactome" id="R-MMU-2559582">
    <property type="pathway name" value="Senescence-Associated Secretory Phenotype (SASP)"/>
</dbReference>
<dbReference type="Reactome" id="R-MMU-2559585">
    <property type="pathway name" value="Oncogene Induced Senescence"/>
</dbReference>
<dbReference type="Reactome" id="R-MMU-3214858">
    <property type="pathway name" value="RMTs methylate histone arginines"/>
</dbReference>
<dbReference type="Reactome" id="R-MMU-69231">
    <property type="pathway name" value="Cyclin D associated events in G1"/>
</dbReference>
<dbReference type="Reactome" id="R-MMU-75815">
    <property type="pathway name" value="Ubiquitin-dependent degradation of Cyclin D"/>
</dbReference>
<dbReference type="Reactome" id="R-MMU-8849470">
    <property type="pathway name" value="PTK6 Regulates Cell Cycle"/>
</dbReference>
<dbReference type="Reactome" id="R-MMU-8878166">
    <property type="pathway name" value="Transcriptional regulation by RUNX2"/>
</dbReference>
<dbReference type="Reactome" id="R-MMU-9616222">
    <property type="pathway name" value="Transcriptional regulation of granulopoiesis"/>
</dbReference>
<dbReference type="Reactome" id="R-MMU-9754119">
    <property type="pathway name" value="Drug-mediated inhibition of CDK4/CDK6 activity"/>
</dbReference>
<dbReference type="BioGRID-ORCS" id="12567">
    <property type="hits" value="13 hits in 81 CRISPR screens"/>
</dbReference>
<dbReference type="ChiTaRS" id="Cdk4">
    <property type="organism name" value="mouse"/>
</dbReference>
<dbReference type="PRO" id="PR:P30285"/>
<dbReference type="Proteomes" id="UP000000589">
    <property type="component" value="Chromosome 10"/>
</dbReference>
<dbReference type="RNAct" id="P30285">
    <property type="molecule type" value="protein"/>
</dbReference>
<dbReference type="Bgee" id="ENSMUSG00000006728">
    <property type="expression patterns" value="Expressed in metanephric ureteric bud and 287 other cell types or tissues"/>
</dbReference>
<dbReference type="ExpressionAtlas" id="P30285">
    <property type="expression patterns" value="baseline and differential"/>
</dbReference>
<dbReference type="GO" id="GO:0005923">
    <property type="term" value="C:bicellular tight junction"/>
    <property type="evidence" value="ECO:0000314"/>
    <property type="project" value="MGI"/>
</dbReference>
<dbReference type="GO" id="GO:0000785">
    <property type="term" value="C:chromatin"/>
    <property type="evidence" value="ECO:0007669"/>
    <property type="project" value="Ensembl"/>
</dbReference>
<dbReference type="GO" id="GO:0097128">
    <property type="term" value="C:cyclin D1-CDK4 complex"/>
    <property type="evidence" value="ECO:0000353"/>
    <property type="project" value="ComplexPortal"/>
</dbReference>
<dbReference type="GO" id="GO:0097129">
    <property type="term" value="C:cyclin D2-CDK4 complex"/>
    <property type="evidence" value="ECO:0000314"/>
    <property type="project" value="MGI"/>
</dbReference>
<dbReference type="GO" id="GO:0097130">
    <property type="term" value="C:cyclin D3-CDK4 complex"/>
    <property type="evidence" value="ECO:0000266"/>
    <property type="project" value="ComplexPortal"/>
</dbReference>
<dbReference type="GO" id="GO:0000307">
    <property type="term" value="C:cyclin-dependent protein kinase holoenzyme complex"/>
    <property type="evidence" value="ECO:0000353"/>
    <property type="project" value="MGI"/>
</dbReference>
<dbReference type="GO" id="GO:0005829">
    <property type="term" value="C:cytosol"/>
    <property type="evidence" value="ECO:0007669"/>
    <property type="project" value="Ensembl"/>
</dbReference>
<dbReference type="GO" id="GO:0031965">
    <property type="term" value="C:nuclear membrane"/>
    <property type="evidence" value="ECO:0007669"/>
    <property type="project" value="UniProtKB-SubCell"/>
</dbReference>
<dbReference type="GO" id="GO:0005730">
    <property type="term" value="C:nucleolus"/>
    <property type="evidence" value="ECO:0007669"/>
    <property type="project" value="Ensembl"/>
</dbReference>
<dbReference type="GO" id="GO:0005654">
    <property type="term" value="C:nucleoplasm"/>
    <property type="evidence" value="ECO:0000304"/>
    <property type="project" value="Reactome"/>
</dbReference>
<dbReference type="GO" id="GO:0005634">
    <property type="term" value="C:nucleus"/>
    <property type="evidence" value="ECO:0000314"/>
    <property type="project" value="MGI"/>
</dbReference>
<dbReference type="GO" id="GO:0005667">
    <property type="term" value="C:transcription regulator complex"/>
    <property type="evidence" value="ECO:0000314"/>
    <property type="project" value="MGI"/>
</dbReference>
<dbReference type="GO" id="GO:0005524">
    <property type="term" value="F:ATP binding"/>
    <property type="evidence" value="ECO:0007669"/>
    <property type="project" value="UniProtKB-KW"/>
</dbReference>
<dbReference type="GO" id="GO:0030332">
    <property type="term" value="F:cyclin binding"/>
    <property type="evidence" value="ECO:0000353"/>
    <property type="project" value="MGI"/>
</dbReference>
<dbReference type="GO" id="GO:0004693">
    <property type="term" value="F:cyclin-dependent protein serine/threonine kinase activity"/>
    <property type="evidence" value="ECO:0000314"/>
    <property type="project" value="MGI"/>
</dbReference>
<dbReference type="GO" id="GO:0016301">
    <property type="term" value="F:kinase activity"/>
    <property type="evidence" value="ECO:0000314"/>
    <property type="project" value="MGI"/>
</dbReference>
<dbReference type="GO" id="GO:0004672">
    <property type="term" value="F:protein kinase activity"/>
    <property type="evidence" value="ECO:0000314"/>
    <property type="project" value="MGI"/>
</dbReference>
<dbReference type="GO" id="GO:0106310">
    <property type="term" value="F:protein serine kinase activity"/>
    <property type="evidence" value="ECO:0007669"/>
    <property type="project" value="RHEA"/>
</dbReference>
<dbReference type="GO" id="GO:0051301">
    <property type="term" value="P:cell division"/>
    <property type="evidence" value="ECO:0007669"/>
    <property type="project" value="UniProtKB-KW"/>
</dbReference>
<dbReference type="GO" id="GO:0071353">
    <property type="term" value="P:cellular response to interleukin-4"/>
    <property type="evidence" value="ECO:0000314"/>
    <property type="project" value="MGI"/>
</dbReference>
<dbReference type="GO" id="GO:1904637">
    <property type="term" value="P:cellular response to ionomycin"/>
    <property type="evidence" value="ECO:0000314"/>
    <property type="project" value="MGI"/>
</dbReference>
<dbReference type="GO" id="GO:0071222">
    <property type="term" value="P:cellular response to lipopolysaccharide"/>
    <property type="evidence" value="ECO:0000314"/>
    <property type="project" value="MGI"/>
</dbReference>
<dbReference type="GO" id="GO:1904628">
    <property type="term" value="P:cellular response to phorbol 13-acetate 12-myristate"/>
    <property type="evidence" value="ECO:0000314"/>
    <property type="project" value="MGI"/>
</dbReference>
<dbReference type="GO" id="GO:0000082">
    <property type="term" value="P:G1/S transition of mitotic cell cycle"/>
    <property type="evidence" value="ECO:0000303"/>
    <property type="project" value="ComplexPortal"/>
</dbReference>
<dbReference type="GO" id="GO:0048146">
    <property type="term" value="P:positive regulation of fibroblast proliferation"/>
    <property type="evidence" value="ECO:0007669"/>
    <property type="project" value="Ensembl"/>
</dbReference>
<dbReference type="GO" id="GO:0010971">
    <property type="term" value="P:positive regulation of G2/M transition of mitotic cell cycle"/>
    <property type="evidence" value="ECO:0000250"/>
    <property type="project" value="UniProtKB"/>
</dbReference>
<dbReference type="GO" id="GO:0051726">
    <property type="term" value="P:regulation of cell cycle"/>
    <property type="evidence" value="ECO:0000314"/>
    <property type="project" value="MGI"/>
</dbReference>
<dbReference type="GO" id="GO:0010468">
    <property type="term" value="P:regulation of gene expression"/>
    <property type="evidence" value="ECO:0007669"/>
    <property type="project" value="Ensembl"/>
</dbReference>
<dbReference type="GO" id="GO:0061469">
    <property type="term" value="P:regulation of type B pancreatic cell proliferation"/>
    <property type="evidence" value="ECO:0000315"/>
    <property type="project" value="MGI"/>
</dbReference>
<dbReference type="GO" id="GO:0009410">
    <property type="term" value="P:response to xenobiotic stimulus"/>
    <property type="evidence" value="ECO:0007669"/>
    <property type="project" value="Ensembl"/>
</dbReference>
<dbReference type="GO" id="GO:0007165">
    <property type="term" value="P:signal transduction"/>
    <property type="evidence" value="ECO:0000314"/>
    <property type="project" value="MGI"/>
</dbReference>
<dbReference type="CDD" id="cd07863">
    <property type="entry name" value="STKc_CDK4"/>
    <property type="match status" value="1"/>
</dbReference>
<dbReference type="FunFam" id="3.30.200.20:FF:000124">
    <property type="entry name" value="Cyclin-dependent kinase 4"/>
    <property type="match status" value="1"/>
</dbReference>
<dbReference type="FunFam" id="1.10.510.10:FF:000205">
    <property type="entry name" value="Cyclin-dependent kinase 6"/>
    <property type="match status" value="1"/>
</dbReference>
<dbReference type="Gene3D" id="3.30.200.20">
    <property type="entry name" value="Phosphorylase Kinase, domain 1"/>
    <property type="match status" value="1"/>
</dbReference>
<dbReference type="Gene3D" id="1.10.510.10">
    <property type="entry name" value="Transferase(Phosphotransferase) domain 1"/>
    <property type="match status" value="1"/>
</dbReference>
<dbReference type="InterPro" id="IPR050108">
    <property type="entry name" value="CDK"/>
</dbReference>
<dbReference type="InterPro" id="IPR011009">
    <property type="entry name" value="Kinase-like_dom_sf"/>
</dbReference>
<dbReference type="InterPro" id="IPR000719">
    <property type="entry name" value="Prot_kinase_dom"/>
</dbReference>
<dbReference type="InterPro" id="IPR017441">
    <property type="entry name" value="Protein_kinase_ATP_BS"/>
</dbReference>
<dbReference type="InterPro" id="IPR008271">
    <property type="entry name" value="Ser/Thr_kinase_AS"/>
</dbReference>
<dbReference type="PANTHER" id="PTHR24056">
    <property type="entry name" value="CELL DIVISION PROTEIN KINASE"/>
    <property type="match status" value="1"/>
</dbReference>
<dbReference type="PANTHER" id="PTHR24056:SF129">
    <property type="entry name" value="CYCLIN-DEPENDENT KINASE 4"/>
    <property type="match status" value="1"/>
</dbReference>
<dbReference type="Pfam" id="PF00069">
    <property type="entry name" value="Pkinase"/>
    <property type="match status" value="1"/>
</dbReference>
<dbReference type="SMART" id="SM00220">
    <property type="entry name" value="S_TKc"/>
    <property type="match status" value="1"/>
</dbReference>
<dbReference type="SUPFAM" id="SSF56112">
    <property type="entry name" value="Protein kinase-like (PK-like)"/>
    <property type="match status" value="1"/>
</dbReference>
<dbReference type="PROSITE" id="PS00107">
    <property type="entry name" value="PROTEIN_KINASE_ATP"/>
    <property type="match status" value="1"/>
</dbReference>
<dbReference type="PROSITE" id="PS50011">
    <property type="entry name" value="PROTEIN_KINASE_DOM"/>
    <property type="match status" value="1"/>
</dbReference>
<dbReference type="PROSITE" id="PS00108">
    <property type="entry name" value="PROTEIN_KINASE_ST"/>
    <property type="match status" value="1"/>
</dbReference>
<evidence type="ECO:0000250" key="1"/>
<evidence type="ECO:0000250" key="2">
    <source>
        <dbReference type="UniProtKB" id="P11802"/>
    </source>
</evidence>
<evidence type="ECO:0000250" key="3">
    <source>
        <dbReference type="UniProtKB" id="P35426"/>
    </source>
</evidence>
<evidence type="ECO:0000255" key="4">
    <source>
        <dbReference type="PROSITE-ProRule" id="PRU00159"/>
    </source>
</evidence>
<evidence type="ECO:0000255" key="5">
    <source>
        <dbReference type="PROSITE-ProRule" id="PRU10027"/>
    </source>
</evidence>
<evidence type="ECO:0000269" key="6">
    <source>
    </source>
</evidence>
<evidence type="ECO:0000269" key="7">
    <source>
    </source>
</evidence>
<evidence type="ECO:0000269" key="8">
    <source>
    </source>
</evidence>
<evidence type="ECO:0000269" key="9">
    <source>
    </source>
</evidence>
<evidence type="ECO:0000269" key="10">
    <source>
    </source>
</evidence>
<evidence type="ECO:0000305" key="11"/>
<reference key="1">
    <citation type="journal article" date="1992" name="Cell">
        <title>Identification and properties of an atypical catalytic subunit (p34PSK-J3/cdk4) for mammalian D type G1 cyclins.</title>
        <authorList>
            <person name="Matsushime H."/>
            <person name="Ewen M.E."/>
            <person name="Strom D.K."/>
            <person name="Kato J.Y."/>
            <person name="Hanks S.K."/>
            <person name="Roussel M.F."/>
            <person name="Sherr C.J."/>
        </authorList>
    </citation>
    <scope>NUCLEOTIDE SEQUENCE [MRNA]</scope>
    <scope>CATALYTIC ACTIVITY</scope>
</reference>
<reference key="2">
    <citation type="journal article" date="2004" name="Genome Res.">
        <title>The status, quality, and expansion of the NIH full-length cDNA project: the Mammalian Gene Collection (MGC).</title>
        <authorList>
            <consortium name="The MGC Project Team"/>
        </authorList>
    </citation>
    <scope>NUCLEOTIDE SEQUENCE [LARGE SCALE MRNA]</scope>
    <source>
        <strain>C57BL/6J</strain>
        <tissue>Olfactory epithelium</tissue>
    </source>
</reference>
<reference key="3">
    <citation type="journal article" date="1992" name="Oncogene">
        <title>An Eph-related receptor protein tyrosine kinase gene segmentally expressed in the developing mouse hindbrain.</title>
        <authorList>
            <person name="Gilardi-Hebenstreit P."/>
            <person name="Nieto M.A."/>
            <person name="Frain M."/>
            <person name="Mattei M.-G."/>
            <person name="Chestier A."/>
            <person name="Wilkinson D.G."/>
            <person name="Charnay P."/>
        </authorList>
    </citation>
    <scope>NUCLEOTIDE SEQUENCE [MRNA] OF 142-188</scope>
    <source>
        <strain>C57BL/6J</strain>
        <tissue>Embryonic brain</tissue>
    </source>
</reference>
<reference key="4">
    <citation type="journal article" date="1993" name="Gene">
        <title>Novel CDC2-related protein kinases produced in murine hematopoietic stem cells.</title>
        <authorList>
            <person name="Ershler M.A."/>
            <person name="Nagorskaya T.V."/>
            <person name="Visser J.W.M."/>
            <person name="Belyavsky A.V."/>
        </authorList>
    </citation>
    <scope>NUCLEOTIDE SEQUENCE [MRNA] OF 144-178</scope>
    <source>
        <strain>CBA/J</strain>
        <tissue>Bone marrow</tissue>
    </source>
</reference>
<reference key="5">
    <citation type="journal article" date="1994" name="Mol. Cell. Biol.">
        <title>Regulation of cyclin D-dependent kinase 4 (cdk4) by cdk4-activating kinase.</title>
        <authorList>
            <person name="Kato J.-Y."/>
            <person name="Matsuoka M."/>
            <person name="Strom D.K."/>
            <person name="Sherr C.J."/>
        </authorList>
    </citation>
    <scope>PHOSPHORYLATION AT THR-172</scope>
</reference>
<reference key="6">
    <citation type="journal article" date="1999" name="Genes Dev.">
        <title>Regulation of CDK4 activity by a novel CDK4-binding protein, p34(SEI-1).</title>
        <authorList>
            <person name="Sugimoto M."/>
            <person name="Nakamura T."/>
            <person name="Ohtani N."/>
            <person name="Hampson L."/>
            <person name="Hampson I.N."/>
            <person name="Shimamoto A."/>
            <person name="Furuichi Y."/>
            <person name="Okumura K."/>
            <person name="Niwa S."/>
            <person name="Taya Y."/>
            <person name="Hara E."/>
        </authorList>
    </citation>
    <scope>INTERACTION WITH SEI1</scope>
</reference>
<reference key="7">
    <citation type="journal article" date="2004" name="Genes Dev.">
        <title>Liver tumors escape negative control of proliferation via PI3K/Akt-mediated block of C/EBP alpha growth inhibitory activity.</title>
        <authorList>
            <person name="Wang G.L."/>
            <person name="Iakova P."/>
            <person name="Wilde M."/>
            <person name="Awad S."/>
            <person name="Timchenko N.A."/>
        </authorList>
    </citation>
    <scope>INTERACTION WITH CEBPA</scope>
</reference>
<reference key="8">
    <citation type="journal article" date="2009" name="Oncogene">
        <title>Lysine 269 is essential for cyclin D1 ubiquitylation by the SCF(Fbx4/alphaB-crystallin) ligase and subsequent proteasome-dependent degradation.</title>
        <authorList>
            <person name="Barbash O."/>
            <person name="Egan E."/>
            <person name="Pontano L.L."/>
            <person name="Kosak J."/>
            <person name="Diehl J.A."/>
        </authorList>
    </citation>
    <scope>INTERACTION WITH CCND1</scope>
</reference>
<reference key="9">
    <citation type="journal article" date="2010" name="Cell">
        <title>A tissue-specific atlas of mouse protein phosphorylation and expression.</title>
        <authorList>
            <person name="Huttlin E.L."/>
            <person name="Jedrychowski M.P."/>
            <person name="Elias J.E."/>
            <person name="Goswami T."/>
            <person name="Rad R."/>
            <person name="Beausoleil S.A."/>
            <person name="Villen J."/>
            <person name="Haas W."/>
            <person name="Sowa M.E."/>
            <person name="Gygi S.P."/>
        </authorList>
    </citation>
    <scope>IDENTIFICATION BY MASS SPECTROMETRY [LARGE SCALE ANALYSIS]</scope>
    <source>
        <tissue>Heart</tissue>
        <tissue>Kidney</tissue>
        <tissue>Lung</tissue>
        <tissue>Spleen</tissue>
        <tissue>Testis</tissue>
    </source>
</reference>
<organism>
    <name type="scientific">Mus musculus</name>
    <name type="common">Mouse</name>
    <dbReference type="NCBI Taxonomy" id="10090"/>
    <lineage>
        <taxon>Eukaryota</taxon>
        <taxon>Metazoa</taxon>
        <taxon>Chordata</taxon>
        <taxon>Craniata</taxon>
        <taxon>Vertebrata</taxon>
        <taxon>Euteleostomi</taxon>
        <taxon>Mammalia</taxon>
        <taxon>Eutheria</taxon>
        <taxon>Euarchontoglires</taxon>
        <taxon>Glires</taxon>
        <taxon>Rodentia</taxon>
        <taxon>Myomorpha</taxon>
        <taxon>Muroidea</taxon>
        <taxon>Muridae</taxon>
        <taxon>Murinae</taxon>
        <taxon>Mus</taxon>
        <taxon>Mus</taxon>
    </lineage>
</organism>
<proteinExistence type="evidence at protein level"/>
<gene>
    <name type="primary">Cdk4</name>
    <name type="synonym">Crk3</name>
</gene>
<sequence>MAATRYEPVAEIGVGAYGTVYKARDPHSGHFVALKSVRVPNGGAAGGGLPVSTVREVALLRRLEAFEHPNVVRLMDVCATSRTDRDIKVTLVFEHIDQDLRTYLDKAPPPGLPVETIKDLMRQFLSGLDFLHANCIVHRDLKPENILVTSNGTVKLADFGLARIYSYQMALTPVVVTLWYRAPEVLLQSTYATPVDMWSVGCIFAEMFRRKPLFCGNSEADQLGKIFDLIGLPPEDDWPREVSLPRGAFAPRGPRPVQSVVPEMEESGAQLLLEMLTFNPHKRISAFRALQHSYLHKEESDAE</sequence>
<keyword id="KW-0007">Acetylation</keyword>
<keyword id="KW-0067">ATP-binding</keyword>
<keyword id="KW-0131">Cell cycle</keyword>
<keyword id="KW-0132">Cell division</keyword>
<keyword id="KW-0963">Cytoplasm</keyword>
<keyword id="KW-0418">Kinase</keyword>
<keyword id="KW-0472">Membrane</keyword>
<keyword id="KW-0547">Nucleotide-binding</keyword>
<keyword id="KW-0539">Nucleus</keyword>
<keyword id="KW-0597">Phosphoprotein</keyword>
<keyword id="KW-0656">Proto-oncogene</keyword>
<keyword id="KW-1185">Reference proteome</keyword>
<keyword id="KW-0723">Serine/threonine-protein kinase</keyword>
<keyword id="KW-0808">Transferase</keyword>
<comment type="function">
    <text evidence="1">Ser/Thr-kinase component of cyclin D-CDK4 (DC) complexes that phosphorylate and inhibit members of the retinoblastoma (RB) protein family including RB1 and regulate the cell-cycle during G(1)/S transition. Phosphorylation of RB1 allows dissociation of the transcription factor E2F from the RB/E2F complexes and the subsequent transcription of E2F target genes which are responsible for the progression through the G(1) phase. Hypophosphorylates RB1 in early G(1) phase. Cyclin D-CDK4 complexes are major integrators of various mitogenenic and antimitogenic signals. Also phosphorylates SMAD3 in a cell-cycle-dependent manner and represses its transcriptional activity. Component of the ternary complex, cyclin D/CDK4/CDKN1B, required for nuclear translocation and activity of the cyclin D-CDK4 complex (By similarity).</text>
</comment>
<comment type="catalytic activity">
    <reaction evidence="7">
        <text>L-seryl-[protein] + ATP = O-phospho-L-seryl-[protein] + ADP + H(+)</text>
        <dbReference type="Rhea" id="RHEA:17989"/>
        <dbReference type="Rhea" id="RHEA-COMP:9863"/>
        <dbReference type="Rhea" id="RHEA-COMP:11604"/>
        <dbReference type="ChEBI" id="CHEBI:15378"/>
        <dbReference type="ChEBI" id="CHEBI:29999"/>
        <dbReference type="ChEBI" id="CHEBI:30616"/>
        <dbReference type="ChEBI" id="CHEBI:83421"/>
        <dbReference type="ChEBI" id="CHEBI:456216"/>
        <dbReference type="EC" id="2.7.11.22"/>
    </reaction>
</comment>
<comment type="catalytic activity">
    <reaction evidence="7">
        <text>L-threonyl-[protein] + ATP = O-phospho-L-threonyl-[protein] + ADP + H(+)</text>
        <dbReference type="Rhea" id="RHEA:46608"/>
        <dbReference type="Rhea" id="RHEA-COMP:11060"/>
        <dbReference type="Rhea" id="RHEA-COMP:11605"/>
        <dbReference type="ChEBI" id="CHEBI:15378"/>
        <dbReference type="ChEBI" id="CHEBI:30013"/>
        <dbReference type="ChEBI" id="CHEBI:30616"/>
        <dbReference type="ChEBI" id="CHEBI:61977"/>
        <dbReference type="ChEBI" id="CHEBI:456216"/>
        <dbReference type="EC" id="2.7.11.22"/>
    </reaction>
</comment>
<comment type="activity regulation">
    <text evidence="2">Both phosphorylation at Thr-172 and binding of a D-type cyclin are necessary for enzymatic activity. Full activation of the cyclin-D-CDK4 complex appears to require other factors such as recruitment of the substrate via a substrate recruitment motif, and/or formation of the CDKN1B ternary complex. Inhibited by INK4 family members. In resting cells, the non-tyrosine-phosphorylated form of CDKN1B prevents phosphorylation at Thr-172 and inactivation, while, in proliferating cells, tyrosine phosphorylation of CDKN1B allows phosphorylation of Thr-172 of CDK4 and subsequent activation.</text>
</comment>
<comment type="subunit">
    <text evidence="2 6 8 9">Component of the D-CDK4 complex, composed of CDK4 and some D-type G1 cyclin (CCND1, CCND2 or CCND3). Interacts directly in the complex with CCND1, CCND2 or CCND3. Interacts with ZNF655. Forms a ternary complex, cyclin D-CDK4-CDKN1B, involved in modulating CDK4 enzymatic activity. Interacts directly with CDKN1B (phosphorylated on 'Tyr-88' and 'Tyr-89'); the interaction allows assembly of the cyclin D-CDK4 complex, Thr-172 phosphorylation, nuclear translocation and enhances the cyclin D-CDK4 complex activity. CDK4 activity is either inhibited or enhanced depending on stoichiometry of complex. The non-tyrosine-phosphorylated form of CDKN1B prevents T-loop phosphorylation of CDK4 producing inactive CDK4. Interacts (unphosphorylated form) with CDK2. Also forms ternary complexes with CDKN1A or CDKN2A. Interacts directly with CDKN1A (via its N-terminal); the interaction promotes the assembly of the cyclin D-CDK4 complex, its nuclear translocation and promotes the cyclin D-dependent enzyme activity of CDK4. Interacts with CCND1; the interaction is prevented with the binding of CCND1 to INSM1 during cell cycle progression (By similarity). Interacts with SEI1 and CCND1. Probably forms a complex composed of chaperones HSP90 and HSP70, co-chaperones CDC37, PPP5C, TSC1 and client protein TSC2, CDK4, AKT, RAF1 and NR3C1; this complex does not contain co-chaperones STIP1/HOP and PTGES3/p23 (By similarity). Interacts with CEBPA (when phosphorylated) (PubMed:15107404). Interacts with FNIP1 and FNIP2 (By similarity).</text>
</comment>
<comment type="interaction">
    <interactant intactId="EBI-847225">
        <id>P30285</id>
    </interactant>
    <interactant intactId="EBI-847243">
        <id>P25322</id>
        <label>Ccnd1</label>
    </interactant>
    <organismsDiffer>false</organismsDiffer>
    <experiments>15</experiments>
</comment>
<comment type="interaction">
    <interactant intactId="EBI-847225">
        <id>P30285</id>
    </interactant>
    <interactant intactId="EBI-1005742">
        <id>P46414</id>
        <label>Cdkn1b</label>
    </interactant>
    <organismsDiffer>false</organismsDiffer>
    <experiments>2</experiments>
</comment>
<comment type="interaction">
    <interactant intactId="EBI-847225">
        <id>P30285</id>
    </interactant>
    <interactant intactId="EBI-375001">
        <id>P24385</id>
        <label>CCND1</label>
    </interactant>
    <organismsDiffer>true</organismsDiffer>
    <experiments>2</experiments>
</comment>
<comment type="interaction">
    <interactant intactId="EBI-847225">
        <id>P30285</id>
    </interactant>
    <interactant intactId="EBI-491274">
        <id>P06400</id>
        <label>RB1</label>
    </interactant>
    <organismsDiffer>true</organismsDiffer>
    <experiments>2</experiments>
</comment>
<comment type="subcellular location">
    <subcellularLocation>
        <location evidence="2">Cytoplasm</location>
    </subcellularLocation>
    <subcellularLocation>
        <location evidence="2">Nucleus</location>
    </subcellularLocation>
    <subcellularLocation>
        <location evidence="2">Nucleus membrane</location>
    </subcellularLocation>
    <text evidence="2">Cytoplasmic when non-complexed. Forms a cyclin D-CDK4 complex in the cytoplasm as cells progress through G(1) phase. The complex accumulates on the nuclear membrane and enters the nucleus on transition from G(1) to S phase. Also present in nucleoli and heterochromatin lumps. Colocalizes with RB1 after release into the nucleus (By similarity).</text>
</comment>
<comment type="PTM">
    <text evidence="1">Phosphorylation at Thr-172 is required for enzymatic activity. Phosphorylated, in vitro, at this site by CCNH-CDK7, but, in vivo, appears to be phosphorylated by a proline-directed kinase. In the cyclin D-CDK4-CDKN1B complex, this phosphorylation and consequent CDK4 enzyme activity, is dependent on the tyrosine phosphorylation state of CDKN1B. Thus, in proliferating cells, CDK4 within the complex is phosphorylated on Thr-172 in the T-loop. In resting cells, phosphorylation on Thr-172 is prevented by the non-tyrosine-phosphorylated form of CDKN1B (By similarity).</text>
</comment>
<comment type="similarity">
    <text evidence="11">Belongs to the protein kinase superfamily. CMGC Ser/Thr protein kinase family. CDC2/CDKX subfamily.</text>
</comment>
<protein>
    <recommendedName>
        <fullName>Cyclin-dependent kinase 4</fullName>
        <ecNumber>2.7.11.22</ecNumber>
    </recommendedName>
    <alternativeName>
        <fullName>CRK3</fullName>
    </alternativeName>
    <alternativeName>
        <fullName>Cell division protein kinase 4</fullName>
    </alternativeName>
    <alternativeName>
        <fullName>PSK-J3</fullName>
    </alternativeName>
</protein>
<accession>P30285</accession>
<name>CDK4_MOUSE</name>